<protein>
    <recommendedName>
        <fullName>Cdc42 effector protein 4</fullName>
    </recommendedName>
    <alternativeName>
        <fullName>Binder of Rho GTPases 4</fullName>
    </alternativeName>
</protein>
<reference key="1">
    <citation type="journal article" date="2000" name="J. Hum. Genet.">
        <title>Sequence analysis, gene expression, and chromosomal assignment of mouse Borg4 gene and its human orthologue.</title>
        <authorList>
            <person name="Osada N."/>
            <person name="Kusuda J."/>
            <person name="Suzuki Y."/>
            <person name="Sugano S."/>
            <person name="Hashimoto K."/>
        </authorList>
    </citation>
    <scope>NUCLEOTIDE SEQUENCE [MRNA]</scope>
    <scope>TISSUE SPECIFICITY</scope>
    <source>
        <tissue>Ileal mucosa</tissue>
    </source>
</reference>
<reference key="2">
    <citation type="journal article" date="2005" name="Science">
        <title>The transcriptional landscape of the mammalian genome.</title>
        <authorList>
            <person name="Carninci P."/>
            <person name="Kasukawa T."/>
            <person name="Katayama S."/>
            <person name="Gough J."/>
            <person name="Frith M.C."/>
            <person name="Maeda N."/>
            <person name="Oyama R."/>
            <person name="Ravasi T."/>
            <person name="Lenhard B."/>
            <person name="Wells C."/>
            <person name="Kodzius R."/>
            <person name="Shimokawa K."/>
            <person name="Bajic V.B."/>
            <person name="Brenner S.E."/>
            <person name="Batalov S."/>
            <person name="Forrest A.R."/>
            <person name="Zavolan M."/>
            <person name="Davis M.J."/>
            <person name="Wilming L.G."/>
            <person name="Aidinis V."/>
            <person name="Allen J.E."/>
            <person name="Ambesi-Impiombato A."/>
            <person name="Apweiler R."/>
            <person name="Aturaliya R.N."/>
            <person name="Bailey T.L."/>
            <person name="Bansal M."/>
            <person name="Baxter L."/>
            <person name="Beisel K.W."/>
            <person name="Bersano T."/>
            <person name="Bono H."/>
            <person name="Chalk A.M."/>
            <person name="Chiu K.P."/>
            <person name="Choudhary V."/>
            <person name="Christoffels A."/>
            <person name="Clutterbuck D.R."/>
            <person name="Crowe M.L."/>
            <person name="Dalla E."/>
            <person name="Dalrymple B.P."/>
            <person name="de Bono B."/>
            <person name="Della Gatta G."/>
            <person name="di Bernardo D."/>
            <person name="Down T."/>
            <person name="Engstrom P."/>
            <person name="Fagiolini M."/>
            <person name="Faulkner G."/>
            <person name="Fletcher C.F."/>
            <person name="Fukushima T."/>
            <person name="Furuno M."/>
            <person name="Futaki S."/>
            <person name="Gariboldi M."/>
            <person name="Georgii-Hemming P."/>
            <person name="Gingeras T.R."/>
            <person name="Gojobori T."/>
            <person name="Green R.E."/>
            <person name="Gustincich S."/>
            <person name="Harbers M."/>
            <person name="Hayashi Y."/>
            <person name="Hensch T.K."/>
            <person name="Hirokawa N."/>
            <person name="Hill D."/>
            <person name="Huminiecki L."/>
            <person name="Iacono M."/>
            <person name="Ikeo K."/>
            <person name="Iwama A."/>
            <person name="Ishikawa T."/>
            <person name="Jakt M."/>
            <person name="Kanapin A."/>
            <person name="Katoh M."/>
            <person name="Kawasawa Y."/>
            <person name="Kelso J."/>
            <person name="Kitamura H."/>
            <person name="Kitano H."/>
            <person name="Kollias G."/>
            <person name="Krishnan S.P."/>
            <person name="Kruger A."/>
            <person name="Kummerfeld S.K."/>
            <person name="Kurochkin I.V."/>
            <person name="Lareau L.F."/>
            <person name="Lazarevic D."/>
            <person name="Lipovich L."/>
            <person name="Liu J."/>
            <person name="Liuni S."/>
            <person name="McWilliam S."/>
            <person name="Madan Babu M."/>
            <person name="Madera M."/>
            <person name="Marchionni L."/>
            <person name="Matsuda H."/>
            <person name="Matsuzawa S."/>
            <person name="Miki H."/>
            <person name="Mignone F."/>
            <person name="Miyake S."/>
            <person name="Morris K."/>
            <person name="Mottagui-Tabar S."/>
            <person name="Mulder N."/>
            <person name="Nakano N."/>
            <person name="Nakauchi H."/>
            <person name="Ng P."/>
            <person name="Nilsson R."/>
            <person name="Nishiguchi S."/>
            <person name="Nishikawa S."/>
            <person name="Nori F."/>
            <person name="Ohara O."/>
            <person name="Okazaki Y."/>
            <person name="Orlando V."/>
            <person name="Pang K.C."/>
            <person name="Pavan W.J."/>
            <person name="Pavesi G."/>
            <person name="Pesole G."/>
            <person name="Petrovsky N."/>
            <person name="Piazza S."/>
            <person name="Reed J."/>
            <person name="Reid J.F."/>
            <person name="Ring B.Z."/>
            <person name="Ringwald M."/>
            <person name="Rost B."/>
            <person name="Ruan Y."/>
            <person name="Salzberg S.L."/>
            <person name="Sandelin A."/>
            <person name="Schneider C."/>
            <person name="Schoenbach C."/>
            <person name="Sekiguchi K."/>
            <person name="Semple C.A."/>
            <person name="Seno S."/>
            <person name="Sessa L."/>
            <person name="Sheng Y."/>
            <person name="Shibata Y."/>
            <person name="Shimada H."/>
            <person name="Shimada K."/>
            <person name="Silva D."/>
            <person name="Sinclair B."/>
            <person name="Sperling S."/>
            <person name="Stupka E."/>
            <person name="Sugiura K."/>
            <person name="Sultana R."/>
            <person name="Takenaka Y."/>
            <person name="Taki K."/>
            <person name="Tammoja K."/>
            <person name="Tan S.L."/>
            <person name="Tang S."/>
            <person name="Taylor M.S."/>
            <person name="Tegner J."/>
            <person name="Teichmann S.A."/>
            <person name="Ueda H.R."/>
            <person name="van Nimwegen E."/>
            <person name="Verardo R."/>
            <person name="Wei C.L."/>
            <person name="Yagi K."/>
            <person name="Yamanishi H."/>
            <person name="Zabarovsky E."/>
            <person name="Zhu S."/>
            <person name="Zimmer A."/>
            <person name="Hide W."/>
            <person name="Bult C."/>
            <person name="Grimmond S.M."/>
            <person name="Teasdale R.D."/>
            <person name="Liu E.T."/>
            <person name="Brusic V."/>
            <person name="Quackenbush J."/>
            <person name="Wahlestedt C."/>
            <person name="Mattick J.S."/>
            <person name="Hume D.A."/>
            <person name="Kai C."/>
            <person name="Sasaki D."/>
            <person name="Tomaru Y."/>
            <person name="Fukuda S."/>
            <person name="Kanamori-Katayama M."/>
            <person name="Suzuki M."/>
            <person name="Aoki J."/>
            <person name="Arakawa T."/>
            <person name="Iida J."/>
            <person name="Imamura K."/>
            <person name="Itoh M."/>
            <person name="Kato T."/>
            <person name="Kawaji H."/>
            <person name="Kawagashira N."/>
            <person name="Kawashima T."/>
            <person name="Kojima M."/>
            <person name="Kondo S."/>
            <person name="Konno H."/>
            <person name="Nakano K."/>
            <person name="Ninomiya N."/>
            <person name="Nishio T."/>
            <person name="Okada M."/>
            <person name="Plessy C."/>
            <person name="Shibata K."/>
            <person name="Shiraki T."/>
            <person name="Suzuki S."/>
            <person name="Tagami M."/>
            <person name="Waki K."/>
            <person name="Watahiki A."/>
            <person name="Okamura-Oho Y."/>
            <person name="Suzuki H."/>
            <person name="Kawai J."/>
            <person name="Hayashizaki Y."/>
        </authorList>
    </citation>
    <scope>NUCLEOTIDE SEQUENCE [LARGE SCALE MRNA]</scope>
    <source>
        <strain>C57BL/6J</strain>
        <tissue>Cerebellum</tissue>
        <tissue>Spleen</tissue>
    </source>
</reference>
<reference key="3">
    <citation type="journal article" date="2004" name="Genome Res.">
        <title>The status, quality, and expansion of the NIH full-length cDNA project: the Mammalian Gene Collection (MGC).</title>
        <authorList>
            <consortium name="The MGC Project Team"/>
        </authorList>
    </citation>
    <scope>NUCLEOTIDE SEQUENCE [LARGE SCALE MRNA]</scope>
</reference>
<reference key="4">
    <citation type="journal article" date="1999" name="Mol. Cell. Biol.">
        <title>The Borgs, a new family of Cdc42 and TC10 GTPase-interacting proteins.</title>
        <authorList>
            <person name="Joberty G."/>
            <person name="Perlungher R.R."/>
            <person name="Macara I.G."/>
        </authorList>
    </citation>
    <scope>NUCLEOTIDE SEQUENCE [MRNA] OF 1-143</scope>
    <scope>INTERACTION WITH RHOQ AND CDC42</scope>
</reference>
<reference key="5">
    <citation type="journal article" date="2007" name="Mol. Cell. Proteomics">
        <title>Qualitative and quantitative analyses of protein phosphorylation in naive and stimulated mouse synaptosomal preparations.</title>
        <authorList>
            <person name="Munton R.P."/>
            <person name="Tweedie-Cullen R."/>
            <person name="Livingstone-Zatchej M."/>
            <person name="Weinandy F."/>
            <person name="Waidelich M."/>
            <person name="Longo D."/>
            <person name="Gehrig P."/>
            <person name="Potthast F."/>
            <person name="Rutishauser D."/>
            <person name="Gerrits B."/>
            <person name="Panse C."/>
            <person name="Schlapbach R."/>
            <person name="Mansuy I.M."/>
        </authorList>
    </citation>
    <scope>IDENTIFICATION BY MASS SPECTROMETRY [LARGE SCALE ANALYSIS]</scope>
    <source>
        <tissue>Brain cortex</tissue>
    </source>
</reference>
<reference key="6">
    <citation type="journal article" date="2007" name="Proc. Natl. Acad. Sci. U.S.A.">
        <title>Large-scale phosphorylation analysis of mouse liver.</title>
        <authorList>
            <person name="Villen J."/>
            <person name="Beausoleil S.A."/>
            <person name="Gerber S.A."/>
            <person name="Gygi S.P."/>
        </authorList>
    </citation>
    <scope>PHOSPHORYLATION [LARGE SCALE ANALYSIS] AT SER-64</scope>
    <scope>IDENTIFICATION BY MASS SPECTROMETRY [LARGE SCALE ANALYSIS]</scope>
    <source>
        <tissue>Liver</tissue>
    </source>
</reference>
<reference key="7">
    <citation type="journal article" date="2009" name="Immunity">
        <title>The phagosomal proteome in interferon-gamma-activated macrophages.</title>
        <authorList>
            <person name="Trost M."/>
            <person name="English L."/>
            <person name="Lemieux S."/>
            <person name="Courcelles M."/>
            <person name="Desjardins M."/>
            <person name="Thibault P."/>
        </authorList>
    </citation>
    <scope>PHOSPHORYLATION [LARGE SCALE ANALYSIS] AT SER-154</scope>
    <scope>IDENTIFICATION BY MASS SPECTROMETRY [LARGE SCALE ANALYSIS]</scope>
</reference>
<reference key="8">
    <citation type="journal article" date="2010" name="Cell">
        <title>A tissue-specific atlas of mouse protein phosphorylation and expression.</title>
        <authorList>
            <person name="Huttlin E.L."/>
            <person name="Jedrychowski M.P."/>
            <person name="Elias J.E."/>
            <person name="Goswami T."/>
            <person name="Rad R."/>
            <person name="Beausoleil S.A."/>
            <person name="Villen J."/>
            <person name="Haas W."/>
            <person name="Sowa M.E."/>
            <person name="Gygi S.P."/>
        </authorList>
    </citation>
    <scope>PHOSPHORYLATION [LARGE SCALE ANALYSIS] AT SER-18; SER-64; SER-107 AND SER-223</scope>
    <scope>IDENTIFICATION BY MASS SPECTROMETRY [LARGE SCALE ANALYSIS]</scope>
    <source>
        <tissue>Brain</tissue>
        <tissue>Brown adipose tissue</tissue>
        <tissue>Heart</tissue>
        <tissue>Kidney</tissue>
        <tissue>Liver</tissue>
        <tissue>Lung</tissue>
        <tissue>Pancreas</tissue>
        <tissue>Spleen</tissue>
    </source>
</reference>
<sequence>MPILKQLVSSSVNSKRRSRADLTAEMISAPLGDFRHTMHVGRAGDAFGDTSFLTSKAREADDESLDEQASASKLSLLSRKFRGSKRSQSVTRGDREQRDMLGSLRDSALFVKNAMSLPQLNEKEAAEKDSSKLPKSLSSSPVKKADARDGGPKSPHRNGATGPHSPDPLLDEQAFGDLMDLPIMPKVSYGLKHAESILSFHIDLGPSMLGDVLSIMDKDQWGSEEEEEAGGYRDKEGPSSIVQAPPVLEVVPPLGRQESKASWDQASMLPPHAVEDDGWAVVAPSPSSARSVGSHTTRDSSSLSSYTSGVLEERSPAFRGPDRVAAAPPRQPDKEFCFMDEEEEDEIRV</sequence>
<proteinExistence type="evidence at protein level"/>
<name>BORG4_MOUSE</name>
<feature type="chain" id="PRO_0000212656" description="Cdc42 effector protein 4">
    <location>
        <begin position="1"/>
        <end position="349"/>
    </location>
</feature>
<feature type="domain" description="CRIB" evidence="3">
    <location>
        <begin position="27"/>
        <end position="41"/>
    </location>
</feature>
<feature type="region of interest" description="Disordered" evidence="4">
    <location>
        <begin position="123"/>
        <end position="172"/>
    </location>
</feature>
<feature type="region of interest" description="Disordered" evidence="4">
    <location>
        <begin position="220"/>
        <end position="240"/>
    </location>
</feature>
<feature type="region of interest" description="Disordered" evidence="4">
    <location>
        <begin position="278"/>
        <end position="349"/>
    </location>
</feature>
<feature type="compositionally biased region" description="Basic and acidic residues" evidence="4">
    <location>
        <begin position="123"/>
        <end position="132"/>
    </location>
</feature>
<feature type="compositionally biased region" description="Low complexity" evidence="4">
    <location>
        <begin position="280"/>
        <end position="308"/>
    </location>
</feature>
<feature type="compositionally biased region" description="Basic and acidic residues" evidence="4">
    <location>
        <begin position="311"/>
        <end position="322"/>
    </location>
</feature>
<feature type="compositionally biased region" description="Acidic residues" evidence="4">
    <location>
        <begin position="338"/>
        <end position="349"/>
    </location>
</feature>
<feature type="modified residue" description="N6-methyllysine" evidence="2">
    <location>
        <position position="5"/>
    </location>
</feature>
<feature type="modified residue" description="Phosphoserine" evidence="10">
    <location>
        <position position="18"/>
    </location>
</feature>
<feature type="modified residue" description="Phosphoserine" evidence="8 10">
    <location>
        <position position="64"/>
    </location>
</feature>
<feature type="modified residue" description="Phosphoserine" evidence="2">
    <location>
        <position position="103"/>
    </location>
</feature>
<feature type="modified residue" description="Phosphoserine" evidence="10">
    <location>
        <position position="107"/>
    </location>
</feature>
<feature type="modified residue" description="Phosphoserine" evidence="2">
    <location>
        <position position="116"/>
    </location>
</feature>
<feature type="modified residue" description="Phosphoserine" evidence="2">
    <location>
        <position position="136"/>
    </location>
</feature>
<feature type="modified residue" description="Phosphoserine" evidence="2">
    <location>
        <position position="138"/>
    </location>
</feature>
<feature type="modified residue" description="Phosphoserine" evidence="2">
    <location>
        <position position="140"/>
    </location>
</feature>
<feature type="modified residue" description="Phosphoserine" evidence="9">
    <location>
        <position position="154"/>
    </location>
</feature>
<feature type="modified residue" description="Phosphoserine" evidence="2">
    <location>
        <position position="165"/>
    </location>
</feature>
<feature type="modified residue" description="Phosphoserine" evidence="10">
    <location>
        <position position="223"/>
    </location>
</feature>
<feature type="modified residue" description="Phosphoserine" evidence="2">
    <location>
        <position position="285"/>
    </location>
</feature>
<feature type="modified residue" description="Phosphoserine" evidence="2">
    <location>
        <position position="288"/>
    </location>
</feature>
<feature type="sequence conflict" description="In Ref. 4; AAD47822." evidence="7" ref="4">
    <original>K</original>
    <variation>R</variation>
    <location>
        <position position="143"/>
    </location>
</feature>
<evidence type="ECO:0000250" key="1"/>
<evidence type="ECO:0000250" key="2">
    <source>
        <dbReference type="UniProtKB" id="Q9H3Q1"/>
    </source>
</evidence>
<evidence type="ECO:0000255" key="3">
    <source>
        <dbReference type="PROSITE-ProRule" id="PRU00057"/>
    </source>
</evidence>
<evidence type="ECO:0000256" key="4">
    <source>
        <dbReference type="SAM" id="MobiDB-lite"/>
    </source>
</evidence>
<evidence type="ECO:0000269" key="5">
    <source>
    </source>
</evidence>
<evidence type="ECO:0000269" key="6">
    <source>
    </source>
</evidence>
<evidence type="ECO:0000305" key="7"/>
<evidence type="ECO:0007744" key="8">
    <source>
    </source>
</evidence>
<evidence type="ECO:0007744" key="9">
    <source>
    </source>
</evidence>
<evidence type="ECO:0007744" key="10">
    <source>
    </source>
</evidence>
<dbReference type="EMBL" id="AB035088">
    <property type="protein sequence ID" value="BAA95932.1"/>
    <property type="molecule type" value="mRNA"/>
</dbReference>
<dbReference type="EMBL" id="AK075739">
    <property type="protein sequence ID" value="BAC35920.1"/>
    <property type="molecule type" value="mRNA"/>
</dbReference>
<dbReference type="EMBL" id="AK165318">
    <property type="protein sequence ID" value="BAE38136.1"/>
    <property type="molecule type" value="mRNA"/>
</dbReference>
<dbReference type="EMBL" id="BC003857">
    <property type="protein sequence ID" value="AAH03857.1"/>
    <property type="molecule type" value="mRNA"/>
</dbReference>
<dbReference type="EMBL" id="AF165114">
    <property type="protein sequence ID" value="AAD47822.1"/>
    <property type="molecule type" value="mRNA"/>
</dbReference>
<dbReference type="CCDS" id="CCDS25604.1"/>
<dbReference type="RefSeq" id="NP_001156818.1">
    <property type="nucleotide sequence ID" value="NM_001163346.1"/>
</dbReference>
<dbReference type="RefSeq" id="NP_064390.1">
    <property type="nucleotide sequence ID" value="NM_020006.2"/>
</dbReference>
<dbReference type="RefSeq" id="XP_006533880.1">
    <property type="nucleotide sequence ID" value="XM_006533817.3"/>
</dbReference>
<dbReference type="RefSeq" id="XP_006533881.1">
    <property type="nucleotide sequence ID" value="XM_006533818.4"/>
</dbReference>
<dbReference type="RefSeq" id="XP_006533882.1">
    <property type="nucleotide sequence ID" value="XM_006533819.4"/>
</dbReference>
<dbReference type="RefSeq" id="XP_017170175.1">
    <property type="nucleotide sequence ID" value="XM_017314686.3"/>
</dbReference>
<dbReference type="BioGRID" id="208129">
    <property type="interactions" value="4"/>
</dbReference>
<dbReference type="FunCoup" id="Q9JM96">
    <property type="interactions" value="879"/>
</dbReference>
<dbReference type="MINT" id="Q9JM96"/>
<dbReference type="STRING" id="10090.ENSMUSP00000102227"/>
<dbReference type="iPTMnet" id="Q9JM96"/>
<dbReference type="PhosphoSitePlus" id="Q9JM96"/>
<dbReference type="SwissPalm" id="Q9JM96"/>
<dbReference type="jPOST" id="Q9JM96"/>
<dbReference type="PaxDb" id="10090-ENSMUSP00000102227"/>
<dbReference type="PeptideAtlas" id="Q9JM96"/>
<dbReference type="ProteomicsDB" id="281701"/>
<dbReference type="Pumba" id="Q9JM96"/>
<dbReference type="Antibodypedia" id="31920">
    <property type="antibodies" value="164 antibodies from 29 providers"/>
</dbReference>
<dbReference type="DNASU" id="56699"/>
<dbReference type="Ensembl" id="ENSMUST00000053536.5">
    <property type="protein sequence ID" value="ENSMUSP00000060227.5"/>
    <property type="gene ID" value="ENSMUSG00000041598.8"/>
</dbReference>
<dbReference type="Ensembl" id="ENSMUST00000106616.2">
    <property type="protein sequence ID" value="ENSMUSP00000102227.2"/>
    <property type="gene ID" value="ENSMUSG00000041598.8"/>
</dbReference>
<dbReference type="GeneID" id="56699"/>
<dbReference type="KEGG" id="mmu:56699"/>
<dbReference type="UCSC" id="uc007mfb.2">
    <property type="organism name" value="mouse"/>
</dbReference>
<dbReference type="AGR" id="MGI:1929760"/>
<dbReference type="CTD" id="23580"/>
<dbReference type="MGI" id="MGI:1929760">
    <property type="gene designation" value="Cdc42ep4"/>
</dbReference>
<dbReference type="VEuPathDB" id="HostDB:ENSMUSG00000041598"/>
<dbReference type="eggNOG" id="ENOG502QRD6">
    <property type="taxonomic scope" value="Eukaryota"/>
</dbReference>
<dbReference type="GeneTree" id="ENSGT00940000161435"/>
<dbReference type="InParanoid" id="Q9JM96"/>
<dbReference type="OMA" id="DKYEYNM"/>
<dbReference type="OrthoDB" id="8898624at2759"/>
<dbReference type="PhylomeDB" id="Q9JM96"/>
<dbReference type="TreeFam" id="TF331725"/>
<dbReference type="Reactome" id="R-MMU-9013149">
    <property type="pathway name" value="RAC1 GTPase cycle"/>
</dbReference>
<dbReference type="Reactome" id="R-MMU-9013404">
    <property type="pathway name" value="RAC2 GTPase cycle"/>
</dbReference>
<dbReference type="Reactome" id="R-MMU-9013406">
    <property type="pathway name" value="RHOQ GTPase cycle"/>
</dbReference>
<dbReference type="BioGRID-ORCS" id="56699">
    <property type="hits" value="4 hits in 78 CRISPR screens"/>
</dbReference>
<dbReference type="ChiTaRS" id="Cdc42ep4">
    <property type="organism name" value="mouse"/>
</dbReference>
<dbReference type="PRO" id="PR:Q9JM96"/>
<dbReference type="Proteomes" id="UP000000589">
    <property type="component" value="Chromosome 11"/>
</dbReference>
<dbReference type="RNAct" id="Q9JM96">
    <property type="molecule type" value="protein"/>
</dbReference>
<dbReference type="Bgee" id="ENSMUSG00000041598">
    <property type="expression patterns" value="Expressed in floor plate of midbrain and 265 other cell types or tissues"/>
</dbReference>
<dbReference type="ExpressionAtlas" id="Q9JM96">
    <property type="expression patterns" value="baseline and differential"/>
</dbReference>
<dbReference type="GO" id="GO:0015629">
    <property type="term" value="C:actin cytoskeleton"/>
    <property type="evidence" value="ECO:0007669"/>
    <property type="project" value="Ensembl"/>
</dbReference>
<dbReference type="GO" id="GO:0005912">
    <property type="term" value="C:adherens junction"/>
    <property type="evidence" value="ECO:0007669"/>
    <property type="project" value="Ensembl"/>
</dbReference>
<dbReference type="GO" id="GO:0005737">
    <property type="term" value="C:cytoplasm"/>
    <property type="evidence" value="ECO:0000314"/>
    <property type="project" value="MGI"/>
</dbReference>
<dbReference type="GO" id="GO:0012505">
    <property type="term" value="C:endomembrane system"/>
    <property type="evidence" value="ECO:0007669"/>
    <property type="project" value="UniProtKB-SubCell"/>
</dbReference>
<dbReference type="GO" id="GO:0015630">
    <property type="term" value="C:microtubule cytoskeleton"/>
    <property type="evidence" value="ECO:0007669"/>
    <property type="project" value="Ensembl"/>
</dbReference>
<dbReference type="GO" id="GO:0045335">
    <property type="term" value="C:phagocytic vesicle"/>
    <property type="evidence" value="ECO:0000314"/>
    <property type="project" value="MGI"/>
</dbReference>
<dbReference type="GO" id="GO:0005886">
    <property type="term" value="C:plasma membrane"/>
    <property type="evidence" value="ECO:0007669"/>
    <property type="project" value="Ensembl"/>
</dbReference>
<dbReference type="GO" id="GO:0071346">
    <property type="term" value="P:cellular response to type II interferon"/>
    <property type="evidence" value="ECO:0000314"/>
    <property type="project" value="MGI"/>
</dbReference>
<dbReference type="GO" id="GO:0031274">
    <property type="term" value="P:positive regulation of pseudopodium assembly"/>
    <property type="evidence" value="ECO:0007669"/>
    <property type="project" value="Ensembl"/>
</dbReference>
<dbReference type="GO" id="GO:0008360">
    <property type="term" value="P:regulation of cell shape"/>
    <property type="evidence" value="ECO:0007669"/>
    <property type="project" value="UniProtKB-KW"/>
</dbReference>
<dbReference type="GO" id="GO:0007266">
    <property type="term" value="P:Rho protein signal transduction"/>
    <property type="evidence" value="ECO:0000314"/>
    <property type="project" value="MGI"/>
</dbReference>
<dbReference type="InterPro" id="IPR029273">
    <property type="entry name" value="Cdc42_effect-like"/>
</dbReference>
<dbReference type="InterPro" id="IPR051296">
    <property type="entry name" value="Cdc42_Effector_BORG/CEP"/>
</dbReference>
<dbReference type="InterPro" id="IPR000095">
    <property type="entry name" value="CRIB_dom"/>
</dbReference>
<dbReference type="PANTHER" id="PTHR15344:SF14">
    <property type="entry name" value="CDC42 EFFECTOR PROTEIN 4"/>
    <property type="match status" value="1"/>
</dbReference>
<dbReference type="PANTHER" id="PTHR15344">
    <property type="entry name" value="CDC42 EFFECTOR PROTEIN BORG"/>
    <property type="match status" value="1"/>
</dbReference>
<dbReference type="Pfam" id="PF14957">
    <property type="entry name" value="BORG_CEP"/>
    <property type="match status" value="1"/>
</dbReference>
<dbReference type="Pfam" id="PF00786">
    <property type="entry name" value="PBD"/>
    <property type="match status" value="1"/>
</dbReference>
<dbReference type="SMART" id="SM00285">
    <property type="entry name" value="PBD"/>
    <property type="match status" value="1"/>
</dbReference>
<dbReference type="PROSITE" id="PS50108">
    <property type="entry name" value="CRIB"/>
    <property type="match status" value="1"/>
</dbReference>
<gene>
    <name type="primary">Cdc42ep4</name>
    <name type="synonym">Borg4</name>
    <name type="synonym">Cep4</name>
</gene>
<accession>Q9JM96</accession>
<accession>Q3TNF3</accession>
<accession>Q9QZT8</accession>
<comment type="function">
    <text>Probably involved in the organization of the actin cytoskeleton. May act downstream of CDC42 to induce actin filament assembly leading to cell shape changes. Induces pseudopodia formation, when overexpressed in fibroblasts.</text>
</comment>
<comment type="subunit">
    <text evidence="5">Interacts with CDC42 and RHOQ, in a GTP-dependent manner.</text>
</comment>
<comment type="subcellular location">
    <subcellularLocation>
        <location evidence="1">Endomembrane system</location>
        <topology evidence="1">Peripheral membrane protein</topology>
    </subcellularLocation>
    <subcellularLocation>
        <location evidence="1">Cytoplasm</location>
        <location evidence="1">Cytoskeleton</location>
    </subcellularLocation>
</comment>
<comment type="tissue specificity">
    <text evidence="6">Ubiquitous.</text>
</comment>
<comment type="similarity">
    <text evidence="7">Belongs to the BORG/CEP family.</text>
</comment>
<keyword id="KW-0133">Cell shape</keyword>
<keyword id="KW-0963">Cytoplasm</keyword>
<keyword id="KW-0206">Cytoskeleton</keyword>
<keyword id="KW-0472">Membrane</keyword>
<keyword id="KW-0488">Methylation</keyword>
<keyword id="KW-0597">Phosphoprotein</keyword>
<keyword id="KW-1185">Reference proteome</keyword>
<organism>
    <name type="scientific">Mus musculus</name>
    <name type="common">Mouse</name>
    <dbReference type="NCBI Taxonomy" id="10090"/>
    <lineage>
        <taxon>Eukaryota</taxon>
        <taxon>Metazoa</taxon>
        <taxon>Chordata</taxon>
        <taxon>Craniata</taxon>
        <taxon>Vertebrata</taxon>
        <taxon>Euteleostomi</taxon>
        <taxon>Mammalia</taxon>
        <taxon>Eutheria</taxon>
        <taxon>Euarchontoglires</taxon>
        <taxon>Glires</taxon>
        <taxon>Rodentia</taxon>
        <taxon>Myomorpha</taxon>
        <taxon>Muroidea</taxon>
        <taxon>Muridae</taxon>
        <taxon>Murinae</taxon>
        <taxon>Mus</taxon>
        <taxon>Mus</taxon>
    </lineage>
</organism>